<keyword id="KW-0903">Direct protein sequencing</keyword>
<keyword id="KW-1015">Disulfide bond</keyword>
<keyword id="KW-0249">Electron transport</keyword>
<keyword id="KW-0488">Methylation</keyword>
<keyword id="KW-0676">Redox-active center</keyword>
<keyword id="KW-1185">Reference proteome</keyword>
<keyword id="KW-0813">Transport</keyword>
<dbReference type="EMBL" id="CP000909">
    <property type="protein sequence ID" value="ABY35747.1"/>
    <property type="molecule type" value="Genomic_DNA"/>
</dbReference>
<dbReference type="PIR" id="A55124">
    <property type="entry name" value="A55124"/>
</dbReference>
<dbReference type="RefSeq" id="WP_012258400.1">
    <property type="nucleotide sequence ID" value="NC_010175.1"/>
</dbReference>
<dbReference type="RefSeq" id="YP_001636136.1">
    <property type="nucleotide sequence ID" value="NC_010175.1"/>
</dbReference>
<dbReference type="SMR" id="Q7M1B9"/>
<dbReference type="FunCoup" id="Q7M1B9">
    <property type="interactions" value="387"/>
</dbReference>
<dbReference type="STRING" id="324602.Caur_2541"/>
<dbReference type="EnsemblBacteria" id="ABY35747">
    <property type="protein sequence ID" value="ABY35747"/>
    <property type="gene ID" value="Caur_2541"/>
</dbReference>
<dbReference type="KEGG" id="cau:Caur_2541"/>
<dbReference type="PATRIC" id="fig|324602.8.peg.2864"/>
<dbReference type="eggNOG" id="COG3118">
    <property type="taxonomic scope" value="Bacteria"/>
</dbReference>
<dbReference type="HOGENOM" id="CLU_090389_10_2_0"/>
<dbReference type="InParanoid" id="Q7M1B9"/>
<dbReference type="Proteomes" id="UP000002008">
    <property type="component" value="Chromosome"/>
</dbReference>
<dbReference type="GO" id="GO:0005737">
    <property type="term" value="C:cytoplasm"/>
    <property type="evidence" value="ECO:0000318"/>
    <property type="project" value="GO_Central"/>
</dbReference>
<dbReference type="GO" id="GO:0005829">
    <property type="term" value="C:cytosol"/>
    <property type="evidence" value="ECO:0000318"/>
    <property type="project" value="GO_Central"/>
</dbReference>
<dbReference type="GO" id="GO:0015035">
    <property type="term" value="F:protein-disulfide reductase activity"/>
    <property type="evidence" value="ECO:0000318"/>
    <property type="project" value="GO_Central"/>
</dbReference>
<dbReference type="GO" id="GO:0045454">
    <property type="term" value="P:cell redox homeostasis"/>
    <property type="evidence" value="ECO:0000318"/>
    <property type="project" value="GO_Central"/>
</dbReference>
<dbReference type="CDD" id="cd02947">
    <property type="entry name" value="TRX_family"/>
    <property type="match status" value="1"/>
</dbReference>
<dbReference type="FunFam" id="3.40.30.10:FF:000001">
    <property type="entry name" value="Thioredoxin"/>
    <property type="match status" value="1"/>
</dbReference>
<dbReference type="Gene3D" id="3.40.30.10">
    <property type="entry name" value="Glutaredoxin"/>
    <property type="match status" value="1"/>
</dbReference>
<dbReference type="InterPro" id="IPR005746">
    <property type="entry name" value="Thioredoxin"/>
</dbReference>
<dbReference type="InterPro" id="IPR036249">
    <property type="entry name" value="Thioredoxin-like_sf"/>
</dbReference>
<dbReference type="InterPro" id="IPR017937">
    <property type="entry name" value="Thioredoxin_CS"/>
</dbReference>
<dbReference type="InterPro" id="IPR013766">
    <property type="entry name" value="Thioredoxin_domain"/>
</dbReference>
<dbReference type="NCBIfam" id="TIGR01068">
    <property type="entry name" value="thioredoxin"/>
    <property type="match status" value="1"/>
</dbReference>
<dbReference type="PANTHER" id="PTHR45663">
    <property type="entry name" value="GEO12009P1"/>
    <property type="match status" value="1"/>
</dbReference>
<dbReference type="PANTHER" id="PTHR45663:SF11">
    <property type="entry name" value="GEO12009P1"/>
    <property type="match status" value="1"/>
</dbReference>
<dbReference type="Pfam" id="PF00085">
    <property type="entry name" value="Thioredoxin"/>
    <property type="match status" value="1"/>
</dbReference>
<dbReference type="PIRSF" id="PIRSF000077">
    <property type="entry name" value="Thioredoxin"/>
    <property type="match status" value="1"/>
</dbReference>
<dbReference type="PRINTS" id="PR00421">
    <property type="entry name" value="THIOREDOXIN"/>
</dbReference>
<dbReference type="SUPFAM" id="SSF52833">
    <property type="entry name" value="Thioredoxin-like"/>
    <property type="match status" value="1"/>
</dbReference>
<dbReference type="PROSITE" id="PS00194">
    <property type="entry name" value="THIOREDOXIN_1"/>
    <property type="match status" value="1"/>
</dbReference>
<dbReference type="PROSITE" id="PS51352">
    <property type="entry name" value="THIOREDOXIN_2"/>
    <property type="match status" value="1"/>
</dbReference>
<sequence>MAKPIEVHDSDFAEKVLKSKTPVVVDFWAPWCGPCRVIAPILDKLAGEYAGRLTIAKVNTDDNVQYASQLGIQGIPTLVIFKDGREVGRLVGARPEAMYREIFDKVLAMA</sequence>
<gene>
    <name type="primary">trxA</name>
    <name type="ordered locus">Caur_2541</name>
</gene>
<accession>Q7M1B9</accession>
<accession>A9WI56</accession>
<proteinExistence type="evidence at protein level"/>
<reference key="1">
    <citation type="journal article" date="2011" name="BMC Genomics">
        <title>Complete genome sequence of the filamentous anoxygenic phototrophic bacterium Chloroflexus aurantiacus.</title>
        <authorList>
            <person name="Tang K.H."/>
            <person name="Barry K."/>
            <person name="Chertkov O."/>
            <person name="Dalin E."/>
            <person name="Han C.S."/>
            <person name="Hauser L.J."/>
            <person name="Honchak B.M."/>
            <person name="Karbach L.E."/>
            <person name="Land M.L."/>
            <person name="Lapidus A."/>
            <person name="Larimer F.W."/>
            <person name="Mikhailova N."/>
            <person name="Pitluck S."/>
            <person name="Pierson B.K."/>
            <person name="Blankenship R.E."/>
        </authorList>
    </citation>
    <scope>NUCLEOTIDE SEQUENCE [LARGE SCALE GENOMIC DNA]</scope>
    <source>
        <strain>ATCC 29366 / DSM 635 / J-10-fl</strain>
    </source>
</reference>
<reference key="2">
    <citation type="journal article" date="1994" name="Acc. Chem. Res.">
        <title>Amino acid sequencing of proteins.</title>
        <authorList>
            <person name="Biemann K."/>
            <person name="Papayannopoulos I.A."/>
        </authorList>
    </citation>
    <scope>PROTEIN SEQUENCE OF 2-110</scope>
    <scope>MASS SPECTROMETRY</scope>
    <scope>METHYLATION AT LYS-105</scope>
</reference>
<comment type="function">
    <text>Participates in various redox reactions through the reversible oxidation of its active center dithiol to a disulfide and catalyzes dithiol-disulfide exchange reactions.</text>
</comment>
<comment type="mass spectrometry"/>
<comment type="similarity">
    <text evidence="3">Belongs to the thioredoxin family.</text>
</comment>
<feature type="initiator methionine" description="Removed" evidence="2">
    <location>
        <position position="1"/>
    </location>
</feature>
<feature type="chain" id="PRO_0000120081" description="Thioredoxin">
    <location>
        <begin position="2"/>
        <end position="110"/>
    </location>
</feature>
<feature type="domain" description="Thioredoxin" evidence="1">
    <location>
        <begin position="3"/>
        <end position="108"/>
    </location>
</feature>
<feature type="modified residue" description="N6,N6-dimethyllysine; alternate" evidence="2">
    <location>
        <position position="105"/>
    </location>
</feature>
<feature type="modified residue" description="N6-methyllysine; alternate" evidence="2">
    <location>
        <position position="105"/>
    </location>
</feature>
<feature type="disulfide bond" description="Redox-active">
    <location>
        <begin position="32"/>
        <end position="35"/>
    </location>
</feature>
<feature type="sequence variant">
    <original>L</original>
    <variation>N</variation>
    <location>
        <position position="42"/>
    </location>
</feature>
<feature type="sequence variant">
    <original>N</original>
    <variation>D</variation>
    <location>
        <position position="59"/>
    </location>
</feature>
<feature type="sequence variant">
    <original>T</original>
    <variation>V</variation>
    <location>
        <position position="60"/>
    </location>
</feature>
<feature type="sequence conflict" description="In Ref. 2; AA sequence." evidence="3" ref="2">
    <original>K</original>
    <variation>Q</variation>
    <location>
        <position position="18"/>
    </location>
</feature>
<feature type="sequence conflict" description="In Ref. 2; AA sequence." evidence="3" ref="2">
    <original>IQGI</original>
    <variation>LKGL</variation>
    <location>
        <begin position="72"/>
        <end position="75"/>
    </location>
</feature>
<organism>
    <name type="scientific">Chloroflexus aurantiacus (strain ATCC 29366 / DSM 635 / J-10-fl)</name>
    <dbReference type="NCBI Taxonomy" id="324602"/>
    <lineage>
        <taxon>Bacteria</taxon>
        <taxon>Bacillati</taxon>
        <taxon>Chloroflexota</taxon>
        <taxon>Chloroflexia</taxon>
        <taxon>Chloroflexales</taxon>
        <taxon>Chloroflexineae</taxon>
        <taxon>Chloroflexaceae</taxon>
        <taxon>Chloroflexus</taxon>
    </lineage>
</organism>
<protein>
    <recommendedName>
        <fullName>Thioredoxin</fullName>
        <shortName>Trx</shortName>
    </recommendedName>
</protein>
<evidence type="ECO:0000255" key="1">
    <source>
        <dbReference type="PROSITE-ProRule" id="PRU00691"/>
    </source>
</evidence>
<evidence type="ECO:0000269" key="2">
    <source ref="2"/>
</evidence>
<evidence type="ECO:0000305" key="3"/>
<name>THIO_CHLAA</name>